<proteinExistence type="inferred from homology"/>
<sequence>MKVLILVLLAVVILQAAPIRKLEDLLPTRYPPDHELVYWCTYANQCDFCWECVHGICRNRIQADWPVIHQNDWIINCTVSRWNGICSYYEGPRNHTDHQMDCANPTSHTYPHREYMKIYERDDL</sequence>
<organismHost>
    <name type="scientific">Ornithodoros</name>
    <name type="common">relapsing fever ticks</name>
    <dbReference type="NCBI Taxonomy" id="6937"/>
</organismHost>
<organismHost>
    <name type="scientific">Phacochoerus aethiopicus</name>
    <name type="common">Warthog</name>
    <dbReference type="NCBI Taxonomy" id="85517"/>
</organismHost>
<organismHost>
    <name type="scientific">Phacochoerus africanus</name>
    <name type="common">Warthog</name>
    <dbReference type="NCBI Taxonomy" id="41426"/>
</organismHost>
<organismHost>
    <name type="scientific">Potamochoerus larvatus</name>
    <name type="common">Bushpig</name>
    <dbReference type="NCBI Taxonomy" id="273792"/>
</organismHost>
<organismHost>
    <name type="scientific">Sus scrofa</name>
    <name type="common">Pig</name>
    <dbReference type="NCBI Taxonomy" id="9823"/>
</organismHost>
<reference key="1">
    <citation type="submission" date="2003-03" db="EMBL/GenBank/DDBJ databases">
        <title>African swine fever virus genomes.</title>
        <authorList>
            <person name="Kutish G.F."/>
            <person name="Rock D.L."/>
        </authorList>
    </citation>
    <scope>NUCLEOTIDE SEQUENCE [LARGE SCALE GENOMIC DNA]</scope>
</reference>
<dbReference type="EMBL" id="AY261361">
    <property type="status" value="NOT_ANNOTATED_CDS"/>
    <property type="molecule type" value="Genomic_DNA"/>
</dbReference>
<dbReference type="Proteomes" id="UP000000860">
    <property type="component" value="Segment"/>
</dbReference>
<dbReference type="InterPro" id="IPR004848">
    <property type="entry name" value="ASFV_fam_110"/>
</dbReference>
<dbReference type="Pfam" id="PF01639">
    <property type="entry name" value="v110"/>
    <property type="match status" value="1"/>
</dbReference>
<name>1108L_ASFM2</name>
<feature type="signal peptide" evidence="2">
    <location>
        <begin position="1"/>
        <end position="16"/>
    </location>
</feature>
<feature type="chain" id="PRO_0000373209" description="Protein MGF 110-8L">
    <location>
        <begin position="17"/>
        <end position="124"/>
    </location>
</feature>
<feature type="glycosylation site" description="N-linked (GlcNAc...) asparagine; by host" evidence="2">
    <location>
        <position position="76"/>
    </location>
</feature>
<feature type="glycosylation site" description="N-linked (GlcNAc...) asparagine; by host" evidence="2">
    <location>
        <position position="94"/>
    </location>
</feature>
<evidence type="ECO:0000250" key="1"/>
<evidence type="ECO:0000255" key="2"/>
<evidence type="ECO:0000305" key="3"/>
<protein>
    <recommendedName>
        <fullName>Protein MGF 110-8L</fullName>
    </recommendedName>
</protein>
<keyword id="KW-0325">Glycoprotein</keyword>
<keyword id="KW-0732">Signal</keyword>
<accession>P0C9I7</accession>
<gene>
    <name type="ordered locus">Mal-014</name>
</gene>
<organism>
    <name type="scientific">African swine fever virus (isolate Tick/Malawi/Lil 20-1/1983)</name>
    <name type="common">ASFV</name>
    <dbReference type="NCBI Taxonomy" id="10500"/>
    <lineage>
        <taxon>Viruses</taxon>
        <taxon>Varidnaviria</taxon>
        <taxon>Bamfordvirae</taxon>
        <taxon>Nucleocytoviricota</taxon>
        <taxon>Pokkesviricetes</taxon>
        <taxon>Asfuvirales</taxon>
        <taxon>Asfarviridae</taxon>
        <taxon>Asfivirus</taxon>
        <taxon>African swine fever virus</taxon>
    </lineage>
</organism>
<comment type="function">
    <text evidence="1">Plays a role in virus cell tropism, and may be required for efficient virus replication in macrophages.</text>
</comment>
<comment type="similarity">
    <text evidence="3">Belongs to the asfivirus MGF 110 family.</text>
</comment>